<keyword id="KW-0963">Cytoplasm</keyword>
<keyword id="KW-0489">Methyltransferase</keyword>
<keyword id="KW-0698">rRNA processing</keyword>
<keyword id="KW-0949">S-adenosyl-L-methionine</keyword>
<keyword id="KW-0808">Transferase</keyword>
<organism>
    <name type="scientific">Salmonella paratyphi B (strain ATCC BAA-1250 / SPB7)</name>
    <dbReference type="NCBI Taxonomy" id="1016998"/>
    <lineage>
        <taxon>Bacteria</taxon>
        <taxon>Pseudomonadati</taxon>
        <taxon>Pseudomonadota</taxon>
        <taxon>Gammaproteobacteria</taxon>
        <taxon>Enterobacterales</taxon>
        <taxon>Enterobacteriaceae</taxon>
        <taxon>Salmonella</taxon>
    </lineage>
</organism>
<feature type="chain" id="PRO_1000087738" description="Ribosomal RNA large subunit methyltransferase M">
    <location>
        <begin position="1"/>
        <end position="366"/>
    </location>
</feature>
<feature type="active site" description="Proton acceptor" evidence="1">
    <location>
        <position position="306"/>
    </location>
</feature>
<feature type="binding site" evidence="1">
    <location>
        <position position="188"/>
    </location>
    <ligand>
        <name>S-adenosyl-L-methionine</name>
        <dbReference type="ChEBI" id="CHEBI:59789"/>
    </ligand>
</feature>
<feature type="binding site" evidence="1">
    <location>
        <begin position="221"/>
        <end position="224"/>
    </location>
    <ligand>
        <name>S-adenosyl-L-methionine</name>
        <dbReference type="ChEBI" id="CHEBI:59789"/>
    </ligand>
</feature>
<feature type="binding site" evidence="1">
    <location>
        <position position="240"/>
    </location>
    <ligand>
        <name>S-adenosyl-L-methionine</name>
        <dbReference type="ChEBI" id="CHEBI:59789"/>
    </ligand>
</feature>
<feature type="binding site" evidence="1">
    <location>
        <position position="260"/>
    </location>
    <ligand>
        <name>S-adenosyl-L-methionine</name>
        <dbReference type="ChEBI" id="CHEBI:59789"/>
    </ligand>
</feature>
<feature type="binding site" evidence="1">
    <location>
        <position position="277"/>
    </location>
    <ligand>
        <name>S-adenosyl-L-methionine</name>
        <dbReference type="ChEBI" id="CHEBI:59789"/>
    </ligand>
</feature>
<proteinExistence type="inferred from homology"/>
<reference key="1">
    <citation type="submission" date="2007-11" db="EMBL/GenBank/DDBJ databases">
        <authorList>
            <consortium name="The Salmonella enterica serovar Paratyphi B Genome Sequencing Project"/>
            <person name="McClelland M."/>
            <person name="Sanderson E.K."/>
            <person name="Porwollik S."/>
            <person name="Spieth J."/>
            <person name="Clifton W.S."/>
            <person name="Fulton R."/>
            <person name="Cordes M."/>
            <person name="Wollam A."/>
            <person name="Shah N."/>
            <person name="Pepin K."/>
            <person name="Bhonagiri V."/>
            <person name="Nash W."/>
            <person name="Johnson M."/>
            <person name="Thiruvilangam P."/>
            <person name="Wilson R."/>
        </authorList>
    </citation>
    <scope>NUCLEOTIDE SEQUENCE [LARGE SCALE GENOMIC DNA]</scope>
    <source>
        <strain>ATCC BAA-1250 / SPB7</strain>
    </source>
</reference>
<accession>A9N2J6</accession>
<name>RLMM_SALPB</name>
<protein>
    <recommendedName>
        <fullName evidence="1">Ribosomal RNA large subunit methyltransferase M</fullName>
        <ecNumber evidence="1">2.1.1.186</ecNumber>
    </recommendedName>
    <alternativeName>
        <fullName evidence="1">23S rRNA (cytidine2498-2'-O)-methyltransferase</fullName>
    </alternativeName>
    <alternativeName>
        <fullName evidence="1">23S rRNA 2'-O-ribose methyltransferase RlmM</fullName>
    </alternativeName>
</protein>
<gene>
    <name evidence="1" type="primary">rlmM</name>
    <name type="ordered locus">SPAB_03709</name>
</gene>
<comment type="function">
    <text evidence="1">Catalyzes the 2'-O-methylation at nucleotide C2498 in 23S rRNA.</text>
</comment>
<comment type="catalytic activity">
    <reaction evidence="1">
        <text>cytidine(2498) in 23S rRNA + S-adenosyl-L-methionine = 2'-O-methylcytidine(2498) in 23S rRNA + S-adenosyl-L-homocysteine + H(+)</text>
        <dbReference type="Rhea" id="RHEA:42788"/>
        <dbReference type="Rhea" id="RHEA-COMP:10244"/>
        <dbReference type="Rhea" id="RHEA-COMP:10245"/>
        <dbReference type="ChEBI" id="CHEBI:15378"/>
        <dbReference type="ChEBI" id="CHEBI:57856"/>
        <dbReference type="ChEBI" id="CHEBI:59789"/>
        <dbReference type="ChEBI" id="CHEBI:74495"/>
        <dbReference type="ChEBI" id="CHEBI:82748"/>
        <dbReference type="EC" id="2.1.1.186"/>
    </reaction>
</comment>
<comment type="subunit">
    <text evidence="1">Monomer.</text>
</comment>
<comment type="subcellular location">
    <subcellularLocation>
        <location evidence="1">Cytoplasm</location>
    </subcellularLocation>
</comment>
<comment type="similarity">
    <text evidence="1">Belongs to the class I-like SAM-binding methyltransferase superfamily. RNA methyltransferase RlmE family. RlmM subfamily.</text>
</comment>
<dbReference type="EC" id="2.1.1.186" evidence="1"/>
<dbReference type="EMBL" id="CP000886">
    <property type="protein sequence ID" value="ABX69047.1"/>
    <property type="molecule type" value="Genomic_DNA"/>
</dbReference>
<dbReference type="RefSeq" id="WP_001045494.1">
    <property type="nucleotide sequence ID" value="NC_010102.1"/>
</dbReference>
<dbReference type="SMR" id="A9N2J6"/>
<dbReference type="KEGG" id="spq:SPAB_03709"/>
<dbReference type="PATRIC" id="fig|1016998.12.peg.3493"/>
<dbReference type="HOGENOM" id="CLU_043780_0_0_6"/>
<dbReference type="BioCyc" id="SENT1016998:SPAB_RS15095-MONOMER"/>
<dbReference type="Proteomes" id="UP000008556">
    <property type="component" value="Chromosome"/>
</dbReference>
<dbReference type="GO" id="GO:0005737">
    <property type="term" value="C:cytoplasm"/>
    <property type="evidence" value="ECO:0007669"/>
    <property type="project" value="UniProtKB-SubCell"/>
</dbReference>
<dbReference type="GO" id="GO:0008757">
    <property type="term" value="F:S-adenosylmethionine-dependent methyltransferase activity"/>
    <property type="evidence" value="ECO:0007669"/>
    <property type="project" value="UniProtKB-UniRule"/>
</dbReference>
<dbReference type="GO" id="GO:0032259">
    <property type="term" value="P:methylation"/>
    <property type="evidence" value="ECO:0007669"/>
    <property type="project" value="UniProtKB-KW"/>
</dbReference>
<dbReference type="GO" id="GO:0006364">
    <property type="term" value="P:rRNA processing"/>
    <property type="evidence" value="ECO:0007669"/>
    <property type="project" value="UniProtKB-UniRule"/>
</dbReference>
<dbReference type="FunFam" id="3.30.2300.20:FF:000001">
    <property type="entry name" value="Ribosomal RNA large subunit methyltransferase M"/>
    <property type="match status" value="1"/>
</dbReference>
<dbReference type="FunFam" id="3.30.70.2810:FF:000001">
    <property type="entry name" value="Ribosomal RNA large subunit methyltransferase M"/>
    <property type="match status" value="1"/>
</dbReference>
<dbReference type="FunFam" id="3.40.50.150:FF:000020">
    <property type="entry name" value="Ribosomal RNA large subunit methyltransferase M"/>
    <property type="match status" value="1"/>
</dbReference>
<dbReference type="Gene3D" id="3.30.2300.20">
    <property type="match status" value="1"/>
</dbReference>
<dbReference type="Gene3D" id="3.30.70.2810">
    <property type="match status" value="1"/>
</dbReference>
<dbReference type="Gene3D" id="3.40.50.150">
    <property type="entry name" value="Vaccinia Virus protein VP39"/>
    <property type="match status" value="1"/>
</dbReference>
<dbReference type="HAMAP" id="MF_01551">
    <property type="entry name" value="23SrRNA_methyltr_M"/>
    <property type="match status" value="1"/>
</dbReference>
<dbReference type="InterPro" id="IPR040739">
    <property type="entry name" value="RlmM_FDX"/>
</dbReference>
<dbReference type="InterPro" id="IPR048646">
    <property type="entry name" value="RlmM_THUMP-like"/>
</dbReference>
<dbReference type="InterPro" id="IPR002877">
    <property type="entry name" value="RNA_MeTrfase_FtsJ_dom"/>
</dbReference>
<dbReference type="InterPro" id="IPR011224">
    <property type="entry name" value="rRNA_MeTrfase_M"/>
</dbReference>
<dbReference type="InterPro" id="IPR029063">
    <property type="entry name" value="SAM-dependent_MTases_sf"/>
</dbReference>
<dbReference type="NCBIfam" id="NF008734">
    <property type="entry name" value="PRK11760.1"/>
    <property type="match status" value="1"/>
</dbReference>
<dbReference type="PANTHER" id="PTHR37524">
    <property type="entry name" value="RIBOSOMAL RNA LARGE SUBUNIT METHYLTRANSFERASE M"/>
    <property type="match status" value="1"/>
</dbReference>
<dbReference type="PANTHER" id="PTHR37524:SF2">
    <property type="entry name" value="RIBOSOMAL RNA METHYLTRANSFERASE FTSJ DOMAIN-CONTAINING PROTEIN"/>
    <property type="match status" value="1"/>
</dbReference>
<dbReference type="Pfam" id="PF01728">
    <property type="entry name" value="FtsJ"/>
    <property type="match status" value="1"/>
</dbReference>
<dbReference type="Pfam" id="PF18125">
    <property type="entry name" value="RlmM_FDX"/>
    <property type="match status" value="1"/>
</dbReference>
<dbReference type="Pfam" id="PF21239">
    <property type="entry name" value="RLMM_N"/>
    <property type="match status" value="1"/>
</dbReference>
<dbReference type="PIRSF" id="PIRSF028774">
    <property type="entry name" value="UCP028774"/>
    <property type="match status" value="1"/>
</dbReference>
<dbReference type="SUPFAM" id="SSF53335">
    <property type="entry name" value="S-adenosyl-L-methionine-dependent methyltransferases"/>
    <property type="match status" value="1"/>
</dbReference>
<sequence length="366" mass="42020">MNKVVLLCRPGFEKECAAEITDKAGKREIFGFARVKENAGYVIYECYQPEDGEKLISELPFSSLIFARQWFVVGELLQHLPPEDRITPIVGMLQGVVEKGGELRVEVADTNESKELMKFCRKFTVPLRAALRDAGVLTNYETPKRPVVHVFFIAPGCCYTGYSFAHNNSPFYMGIPRLKFPSDAPSRSTLKLEEALHVFIPEDEWDERLANGMYAVDLGACPGGWTYQLVKRNMWVYSVDNGPMAQSLMDTGQVTWLREDGFRYRPNRNNISWMVCDMVEKPAKVTALMAQWLVNGWCRETIFNLKLPMKKRYEEVSHNLAYLQAQLDEHGVNAQIQARQLYHDREEVTVHVRRLWAAVGGRRDER</sequence>
<evidence type="ECO:0000255" key="1">
    <source>
        <dbReference type="HAMAP-Rule" id="MF_01551"/>
    </source>
</evidence>